<keyword id="KW-0997">Cell inner membrane</keyword>
<keyword id="KW-1003">Cell membrane</keyword>
<keyword id="KW-0472">Membrane</keyword>
<keyword id="KW-0520">NAD</keyword>
<keyword id="KW-0874">Quinone</keyword>
<keyword id="KW-1185">Reference proteome</keyword>
<keyword id="KW-1278">Translocase</keyword>
<keyword id="KW-0812">Transmembrane</keyword>
<keyword id="KW-1133">Transmembrane helix</keyword>
<keyword id="KW-0813">Transport</keyword>
<keyword id="KW-0830">Ubiquinone</keyword>
<organism>
    <name type="scientific">Opitutus terrae (strain DSM 11246 / JCM 15787 / PB90-1)</name>
    <dbReference type="NCBI Taxonomy" id="452637"/>
    <lineage>
        <taxon>Bacteria</taxon>
        <taxon>Pseudomonadati</taxon>
        <taxon>Verrucomicrobiota</taxon>
        <taxon>Opitutia</taxon>
        <taxon>Opitutales</taxon>
        <taxon>Opitutaceae</taxon>
        <taxon>Opitutus</taxon>
    </lineage>
</organism>
<proteinExistence type="inferred from homology"/>
<name>NUON2_OPITP</name>
<dbReference type="EC" id="7.1.1.-" evidence="1"/>
<dbReference type="EMBL" id="CP001032">
    <property type="protein sequence ID" value="ACB74044.1"/>
    <property type="molecule type" value="Genomic_DNA"/>
</dbReference>
<dbReference type="RefSeq" id="WP_012373582.1">
    <property type="nucleotide sequence ID" value="NC_010571.1"/>
</dbReference>
<dbReference type="SMR" id="B1ZUK1"/>
<dbReference type="STRING" id="452637.Oter_0755"/>
<dbReference type="KEGG" id="ote:Oter_0755"/>
<dbReference type="eggNOG" id="COG1007">
    <property type="taxonomic scope" value="Bacteria"/>
</dbReference>
<dbReference type="HOGENOM" id="CLU_007100_1_5_0"/>
<dbReference type="OrthoDB" id="9807568at2"/>
<dbReference type="Proteomes" id="UP000007013">
    <property type="component" value="Chromosome"/>
</dbReference>
<dbReference type="GO" id="GO:0005886">
    <property type="term" value="C:plasma membrane"/>
    <property type="evidence" value="ECO:0007669"/>
    <property type="project" value="UniProtKB-SubCell"/>
</dbReference>
<dbReference type="GO" id="GO:0008137">
    <property type="term" value="F:NADH dehydrogenase (ubiquinone) activity"/>
    <property type="evidence" value="ECO:0007669"/>
    <property type="project" value="InterPro"/>
</dbReference>
<dbReference type="GO" id="GO:0050136">
    <property type="term" value="F:NADH:ubiquinone reductase (non-electrogenic) activity"/>
    <property type="evidence" value="ECO:0007669"/>
    <property type="project" value="UniProtKB-UniRule"/>
</dbReference>
<dbReference type="GO" id="GO:0048038">
    <property type="term" value="F:quinone binding"/>
    <property type="evidence" value="ECO:0007669"/>
    <property type="project" value="UniProtKB-KW"/>
</dbReference>
<dbReference type="GO" id="GO:0042773">
    <property type="term" value="P:ATP synthesis coupled electron transport"/>
    <property type="evidence" value="ECO:0007669"/>
    <property type="project" value="InterPro"/>
</dbReference>
<dbReference type="HAMAP" id="MF_00445">
    <property type="entry name" value="NDH1_NuoN_1"/>
    <property type="match status" value="1"/>
</dbReference>
<dbReference type="InterPro" id="IPR010096">
    <property type="entry name" value="NADH-Q_OxRdtase_suN/2"/>
</dbReference>
<dbReference type="InterPro" id="IPR001750">
    <property type="entry name" value="ND/Mrp_TM"/>
</dbReference>
<dbReference type="NCBIfam" id="TIGR01770">
    <property type="entry name" value="NDH_I_N"/>
    <property type="match status" value="1"/>
</dbReference>
<dbReference type="PANTHER" id="PTHR22773">
    <property type="entry name" value="NADH DEHYDROGENASE"/>
    <property type="match status" value="1"/>
</dbReference>
<dbReference type="Pfam" id="PF00361">
    <property type="entry name" value="Proton_antipo_M"/>
    <property type="match status" value="1"/>
</dbReference>
<feature type="chain" id="PRO_0000391194" description="NADH-quinone oxidoreductase subunit N 2">
    <location>
        <begin position="1"/>
        <end position="479"/>
    </location>
</feature>
<feature type="transmembrane region" description="Helical" evidence="1">
    <location>
        <begin position="4"/>
        <end position="24"/>
    </location>
</feature>
<feature type="transmembrane region" description="Helical" evidence="1">
    <location>
        <begin position="43"/>
        <end position="63"/>
    </location>
</feature>
<feature type="transmembrane region" description="Helical" evidence="1">
    <location>
        <begin position="67"/>
        <end position="87"/>
    </location>
</feature>
<feature type="transmembrane region" description="Helical" evidence="1">
    <location>
        <begin position="99"/>
        <end position="119"/>
    </location>
</feature>
<feature type="transmembrane region" description="Helical" evidence="1">
    <location>
        <begin position="121"/>
        <end position="141"/>
    </location>
</feature>
<feature type="transmembrane region" description="Helical" evidence="1">
    <location>
        <begin position="159"/>
        <end position="179"/>
    </location>
</feature>
<feature type="transmembrane region" description="Helical" evidence="1">
    <location>
        <begin position="201"/>
        <end position="221"/>
    </location>
</feature>
<feature type="transmembrane region" description="Helical" evidence="1">
    <location>
        <begin position="239"/>
        <end position="259"/>
    </location>
</feature>
<feature type="transmembrane region" description="Helical" evidence="1">
    <location>
        <begin position="267"/>
        <end position="287"/>
    </location>
</feature>
<feature type="transmembrane region" description="Helical" evidence="1">
    <location>
        <begin position="294"/>
        <end position="314"/>
    </location>
</feature>
<feature type="transmembrane region" description="Helical" evidence="1">
    <location>
        <begin position="318"/>
        <end position="338"/>
    </location>
</feature>
<feature type="transmembrane region" description="Helical" evidence="1">
    <location>
        <begin position="364"/>
        <end position="384"/>
    </location>
</feature>
<feature type="transmembrane region" description="Helical" evidence="1">
    <location>
        <begin position="401"/>
        <end position="421"/>
    </location>
</feature>
<feature type="transmembrane region" description="Helical" evidence="1">
    <location>
        <begin position="444"/>
        <end position="464"/>
    </location>
</feature>
<gene>
    <name evidence="1" type="primary">nuoN2</name>
    <name type="ordered locus">Oter_0755</name>
</gene>
<sequence>MTSFVSFLPELVLLAGALALFVVTLGQNNVRLARILSVATASGVLVAALATVNHSAVLFSGAYRVDAFSQLLKIAIAFGYLCVGILSGQLRDIRGEAKPEYFLFLALSMTGLLALVSSIDVITLIIALELSSFPLYLMVAMRREREGQRVQMESAIKYIMFGIAANGVMFFGFGYLYGLTGSTSLPVILEKLPPLLSSPLAVTGLALTLAGFLYKLAVFPFHFWTPDVYQGSSNETASLIASLPKLGAVAVLVRFVSLAAPGHETLATLLTCLAIASMVYGNLIALVQTDLKRLLGFSGIAHAGYVMVGFVAMDNFGFASALYYIAGYMLMVLACFVVVCQVSRDGANVAITELAGLHKRSPLLAVTLIVGVFALAGVPPFVGFMAKLNLLTSAWQAGHTALVVLTVINSAIAIYYYLQIVRAAFFAESDAQPAPIALTPSMSALCVLLIVAITLLGVAPAFTIDAITNSLATISTVSS</sequence>
<protein>
    <recommendedName>
        <fullName evidence="1">NADH-quinone oxidoreductase subunit N 2</fullName>
        <ecNumber evidence="1">7.1.1.-</ecNumber>
    </recommendedName>
    <alternativeName>
        <fullName evidence="1">NADH dehydrogenase I subunit N 2</fullName>
    </alternativeName>
    <alternativeName>
        <fullName evidence="1">NDH-1 subunit N 2</fullName>
    </alternativeName>
</protein>
<reference key="1">
    <citation type="journal article" date="2011" name="J. Bacteriol.">
        <title>Genome sequence of the verrucomicrobium Opitutus terrae PB90-1, an abundant inhabitant of rice paddy soil ecosystems.</title>
        <authorList>
            <person name="van Passel M.W."/>
            <person name="Kant R."/>
            <person name="Palva A."/>
            <person name="Copeland A."/>
            <person name="Lucas S."/>
            <person name="Lapidus A."/>
            <person name="Glavina del Rio T."/>
            <person name="Pitluck S."/>
            <person name="Goltsman E."/>
            <person name="Clum A."/>
            <person name="Sun H."/>
            <person name="Schmutz J."/>
            <person name="Larimer F.W."/>
            <person name="Land M.L."/>
            <person name="Hauser L."/>
            <person name="Kyrpides N."/>
            <person name="Mikhailova N."/>
            <person name="Richardson P.P."/>
            <person name="Janssen P.H."/>
            <person name="de Vos W.M."/>
            <person name="Smidt H."/>
        </authorList>
    </citation>
    <scope>NUCLEOTIDE SEQUENCE [LARGE SCALE GENOMIC DNA]</scope>
    <source>
        <strain>DSM 11246 / JCM 15787 / PB90-1</strain>
    </source>
</reference>
<evidence type="ECO:0000255" key="1">
    <source>
        <dbReference type="HAMAP-Rule" id="MF_00445"/>
    </source>
</evidence>
<accession>B1ZUK1</accession>
<comment type="function">
    <text evidence="1">NDH-1 shuttles electrons from NADH, via FMN and iron-sulfur (Fe-S) centers, to quinones in the respiratory chain. The immediate electron acceptor for the enzyme in this species is believed to be ubiquinone. Couples the redox reaction to proton translocation (for every two electrons transferred, four hydrogen ions are translocated across the cytoplasmic membrane), and thus conserves the redox energy in a proton gradient.</text>
</comment>
<comment type="catalytic activity">
    <reaction evidence="1">
        <text>a quinone + NADH + 5 H(+)(in) = a quinol + NAD(+) + 4 H(+)(out)</text>
        <dbReference type="Rhea" id="RHEA:57888"/>
        <dbReference type="ChEBI" id="CHEBI:15378"/>
        <dbReference type="ChEBI" id="CHEBI:24646"/>
        <dbReference type="ChEBI" id="CHEBI:57540"/>
        <dbReference type="ChEBI" id="CHEBI:57945"/>
        <dbReference type="ChEBI" id="CHEBI:132124"/>
    </reaction>
</comment>
<comment type="subunit">
    <text evidence="1">NDH-1 is composed of 14 different subunits. Subunits NuoA, H, J, K, L, M, N constitute the membrane sector of the complex.</text>
</comment>
<comment type="subcellular location">
    <subcellularLocation>
        <location evidence="1">Cell inner membrane</location>
        <topology evidence="1">Multi-pass membrane protein</topology>
    </subcellularLocation>
</comment>
<comment type="similarity">
    <text evidence="1">Belongs to the complex I subunit 2 family.</text>
</comment>